<protein>
    <recommendedName>
        <fullName>SWI5-dependent HO expression protein 3</fullName>
    </recommendedName>
</protein>
<keyword id="KW-0175">Coiled coil</keyword>
<keyword id="KW-0256">Endoplasmic reticulum</keyword>
<keyword id="KW-0472">Membrane</keyword>
<keyword id="KW-0509">mRNA transport</keyword>
<keyword id="KW-1185">Reference proteome</keyword>
<keyword id="KW-0694">RNA-binding</keyword>
<keyword id="KW-0813">Transport</keyword>
<evidence type="ECO:0000250" key="1"/>
<evidence type="ECO:0000255" key="2"/>
<evidence type="ECO:0000256" key="3">
    <source>
        <dbReference type="SAM" id="MobiDB-lite"/>
    </source>
</evidence>
<evidence type="ECO:0000305" key="4"/>
<name>SHE3_CANGA</name>
<sequence>MSLENAVRVVSTDEKGNQASSTKLIELLHSRVDALTTTNIELTTKLQELLGNLDTVQQRERKLKESAASLRHEGDNVTLMLNRKERKLTEVKEAIVELTTKLGEAKEVNHSLKQKFEDEGLTSEESLRESISEVKTEYDTLVKSHEIYESSNDIQCKSLEDRFSQALLIHGENMKALDGTAEQILANNSELVSQLRATENKAESARTSIRNASIDTAAKVDLEKWLFLYKEAQRICEEFASKTDTKLPDELQAIIDDPVLKELDARFALDEIQYGKTRNKRIPSNPLLSNSQAAARRVASPSANYSPRVSSAQGSLPGITRTPSMKVNNKFSDSNAQEVPTRLHSHGSRSKRSSMVFK</sequence>
<gene>
    <name type="primary">SHE3</name>
    <name type="ordered locus">CAGL0K07942g</name>
</gene>
<organism>
    <name type="scientific">Candida glabrata (strain ATCC 2001 / BCRC 20586 / JCM 3761 / NBRC 0622 / NRRL Y-65 / CBS 138)</name>
    <name type="common">Yeast</name>
    <name type="synonym">Nakaseomyces glabratus</name>
    <dbReference type="NCBI Taxonomy" id="284593"/>
    <lineage>
        <taxon>Eukaryota</taxon>
        <taxon>Fungi</taxon>
        <taxon>Dikarya</taxon>
        <taxon>Ascomycota</taxon>
        <taxon>Saccharomycotina</taxon>
        <taxon>Saccharomycetes</taxon>
        <taxon>Saccharomycetales</taxon>
        <taxon>Saccharomycetaceae</taxon>
        <taxon>Nakaseomyces</taxon>
    </lineage>
</organism>
<dbReference type="EMBL" id="CR380957">
    <property type="protein sequence ID" value="CAG61529.1"/>
    <property type="molecule type" value="Genomic_DNA"/>
</dbReference>
<dbReference type="RefSeq" id="XP_448566.1">
    <property type="nucleotide sequence ID" value="XM_448566.1"/>
</dbReference>
<dbReference type="SMR" id="Q6FMH8"/>
<dbReference type="FunCoup" id="Q6FMH8">
    <property type="interactions" value="1514"/>
</dbReference>
<dbReference type="STRING" id="284593.Q6FMH8"/>
<dbReference type="EnsemblFungi" id="CAGL0K07942g-T">
    <property type="protein sequence ID" value="CAGL0K07942g-T-p1"/>
    <property type="gene ID" value="CAGL0K07942g"/>
</dbReference>
<dbReference type="KEGG" id="cgr:2890368"/>
<dbReference type="CGD" id="CAL0134323">
    <property type="gene designation" value="CAGL0K07942g"/>
</dbReference>
<dbReference type="VEuPathDB" id="FungiDB:CAGL0K07942g"/>
<dbReference type="eggNOG" id="ENOG502QSQX">
    <property type="taxonomic scope" value="Eukaryota"/>
</dbReference>
<dbReference type="HOGENOM" id="CLU_773848_0_0_1"/>
<dbReference type="InParanoid" id="Q6FMH8"/>
<dbReference type="OMA" id="HFMANIN"/>
<dbReference type="Proteomes" id="UP000002428">
    <property type="component" value="Chromosome K"/>
</dbReference>
<dbReference type="GO" id="GO:0005789">
    <property type="term" value="C:endoplasmic reticulum membrane"/>
    <property type="evidence" value="ECO:0007669"/>
    <property type="project" value="UniProtKB-SubCell"/>
</dbReference>
<dbReference type="GO" id="GO:0003723">
    <property type="term" value="F:RNA binding"/>
    <property type="evidence" value="ECO:0007669"/>
    <property type="project" value="UniProtKB-KW"/>
</dbReference>
<dbReference type="GO" id="GO:0048309">
    <property type="term" value="P:endoplasmic reticulum inheritance"/>
    <property type="evidence" value="ECO:0007669"/>
    <property type="project" value="InterPro"/>
</dbReference>
<dbReference type="GO" id="GO:0051028">
    <property type="term" value="P:mRNA transport"/>
    <property type="evidence" value="ECO:0007669"/>
    <property type="project" value="UniProtKB-KW"/>
</dbReference>
<dbReference type="InterPro" id="IPR031398">
    <property type="entry name" value="She3"/>
</dbReference>
<dbReference type="Pfam" id="PF17078">
    <property type="entry name" value="SHE3"/>
    <property type="match status" value="1"/>
</dbReference>
<feature type="chain" id="PRO_0000408930" description="SWI5-dependent HO expression protein 3">
    <location>
        <begin position="1"/>
        <end position="358"/>
    </location>
</feature>
<feature type="region of interest" description="Disordered" evidence="3">
    <location>
        <begin position="279"/>
        <end position="358"/>
    </location>
</feature>
<feature type="coiled-coil region" evidence="2">
    <location>
        <begin position="39"/>
        <end position="118"/>
    </location>
</feature>
<feature type="coiled-coil region" evidence="2">
    <location>
        <begin position="181"/>
        <end position="215"/>
    </location>
</feature>
<feature type="compositionally biased region" description="Polar residues" evidence="3">
    <location>
        <begin position="301"/>
        <end position="314"/>
    </location>
</feature>
<feature type="compositionally biased region" description="Polar residues" evidence="3">
    <location>
        <begin position="321"/>
        <end position="338"/>
    </location>
</feature>
<feature type="compositionally biased region" description="Basic residues" evidence="3">
    <location>
        <begin position="343"/>
        <end position="352"/>
    </location>
</feature>
<reference key="1">
    <citation type="journal article" date="2004" name="Nature">
        <title>Genome evolution in yeasts.</title>
        <authorList>
            <person name="Dujon B."/>
            <person name="Sherman D."/>
            <person name="Fischer G."/>
            <person name="Durrens P."/>
            <person name="Casaregola S."/>
            <person name="Lafontaine I."/>
            <person name="de Montigny J."/>
            <person name="Marck C."/>
            <person name="Neuveglise C."/>
            <person name="Talla E."/>
            <person name="Goffard N."/>
            <person name="Frangeul L."/>
            <person name="Aigle M."/>
            <person name="Anthouard V."/>
            <person name="Babour A."/>
            <person name="Barbe V."/>
            <person name="Barnay S."/>
            <person name="Blanchin S."/>
            <person name="Beckerich J.-M."/>
            <person name="Beyne E."/>
            <person name="Bleykasten C."/>
            <person name="Boisrame A."/>
            <person name="Boyer J."/>
            <person name="Cattolico L."/>
            <person name="Confanioleri F."/>
            <person name="de Daruvar A."/>
            <person name="Despons L."/>
            <person name="Fabre E."/>
            <person name="Fairhead C."/>
            <person name="Ferry-Dumazet H."/>
            <person name="Groppi A."/>
            <person name="Hantraye F."/>
            <person name="Hennequin C."/>
            <person name="Jauniaux N."/>
            <person name="Joyet P."/>
            <person name="Kachouri R."/>
            <person name="Kerrest A."/>
            <person name="Koszul R."/>
            <person name="Lemaire M."/>
            <person name="Lesur I."/>
            <person name="Ma L."/>
            <person name="Muller H."/>
            <person name="Nicaud J.-M."/>
            <person name="Nikolski M."/>
            <person name="Oztas S."/>
            <person name="Ozier-Kalogeropoulos O."/>
            <person name="Pellenz S."/>
            <person name="Potier S."/>
            <person name="Richard G.-F."/>
            <person name="Straub M.-L."/>
            <person name="Suleau A."/>
            <person name="Swennen D."/>
            <person name="Tekaia F."/>
            <person name="Wesolowski-Louvel M."/>
            <person name="Westhof E."/>
            <person name="Wirth B."/>
            <person name="Zeniou-Meyer M."/>
            <person name="Zivanovic Y."/>
            <person name="Bolotin-Fukuhara M."/>
            <person name="Thierry A."/>
            <person name="Bouchier C."/>
            <person name="Caudron B."/>
            <person name="Scarpelli C."/>
            <person name="Gaillardin C."/>
            <person name="Weissenbach J."/>
            <person name="Wincker P."/>
            <person name="Souciet J.-L."/>
        </authorList>
    </citation>
    <scope>NUCLEOTIDE SEQUENCE [LARGE SCALE GENOMIC DNA]</scope>
    <source>
        <strain>ATCC 2001 / BCRC 20586 / JCM 3761 / NBRC 0622 / NRRL Y-65 / CBS 138</strain>
    </source>
</reference>
<comment type="function">
    <text evidence="1">RNA-binding protein that binds specific mRNAs including the ASH1 mRNA, coding for a repressor of the HO endonuclease. Part of the mRNA localization machinery that restricts accumulation of certain proteins to the bud and in the daughter cell. Required for the delivery of cortical endoplasmic reticulum into the emerging bud (By similarity).</text>
</comment>
<comment type="subcellular location">
    <subcellularLocation>
        <location evidence="1">Endoplasmic reticulum membrane</location>
        <topology evidence="1">Peripheral membrane protein</topology>
    </subcellularLocation>
</comment>
<comment type="similarity">
    <text evidence="4">Belongs to the SHE3 family.</text>
</comment>
<accession>Q6FMH8</accession>
<proteinExistence type="inferred from homology"/>